<evidence type="ECO:0000255" key="1">
    <source>
        <dbReference type="HAMAP-Rule" id="MF_00440"/>
    </source>
</evidence>
<evidence type="ECO:0000256" key="2">
    <source>
        <dbReference type="SAM" id="MobiDB-lite"/>
    </source>
</evidence>
<protein>
    <recommendedName>
        <fullName evidence="1">Transcriptional repressor NrdR</fullName>
    </recommendedName>
</protein>
<gene>
    <name evidence="1" type="primary">nrdR</name>
    <name type="ordered locus">slr0780</name>
</gene>
<keyword id="KW-0067">ATP-binding</keyword>
<keyword id="KW-0238">DNA-binding</keyword>
<keyword id="KW-0479">Metal-binding</keyword>
<keyword id="KW-0547">Nucleotide-binding</keyword>
<keyword id="KW-1185">Reference proteome</keyword>
<keyword id="KW-0678">Repressor</keyword>
<keyword id="KW-0804">Transcription</keyword>
<keyword id="KW-0805">Transcription regulation</keyword>
<keyword id="KW-0862">Zinc</keyword>
<keyword id="KW-0863">Zinc-finger</keyword>
<name>NRDR_SYNY3</name>
<feature type="chain" id="PRO_0000182370" description="Transcriptional repressor NrdR">
    <location>
        <begin position="1"/>
        <end position="161"/>
    </location>
</feature>
<feature type="domain" description="ATP-cone" evidence="1">
    <location>
        <begin position="49"/>
        <end position="139"/>
    </location>
</feature>
<feature type="zinc finger region" evidence="1">
    <location>
        <begin position="3"/>
        <end position="34"/>
    </location>
</feature>
<feature type="region of interest" description="Disordered" evidence="2">
    <location>
        <begin position="1"/>
        <end position="21"/>
    </location>
</feature>
<feature type="compositionally biased region" description="Basic residues" evidence="2">
    <location>
        <begin position="1"/>
        <end position="11"/>
    </location>
</feature>
<comment type="function">
    <text evidence="1">Negatively regulates transcription of bacterial ribonucleotide reductase nrd genes and operons by binding to NrdR-boxes.</text>
</comment>
<comment type="cofactor">
    <cofactor evidence="1">
        <name>Zn(2+)</name>
        <dbReference type="ChEBI" id="CHEBI:29105"/>
    </cofactor>
    <text evidence="1">Binds 1 zinc ion.</text>
</comment>
<comment type="similarity">
    <text evidence="1">Belongs to the NrdR family.</text>
</comment>
<proteinExistence type="inferred from homology"/>
<sequence>MQCPHCQHHNSRVLESRSSEGGQSIRRRRECLECKHRFTTYERLELLPVTVIKQDGERQAFDRSKLLRGMVRACEKTDINFQRLEHIVEEIEANLQQQPKREIHSEAIGQMVLQYLRQESEVAYIRFASVYGRFQGIADFVDTLEQLQREQYPERQYLTMT</sequence>
<organism>
    <name type="scientific">Synechocystis sp. (strain ATCC 27184 / PCC 6803 / Kazusa)</name>
    <dbReference type="NCBI Taxonomy" id="1111708"/>
    <lineage>
        <taxon>Bacteria</taxon>
        <taxon>Bacillati</taxon>
        <taxon>Cyanobacteriota</taxon>
        <taxon>Cyanophyceae</taxon>
        <taxon>Synechococcales</taxon>
        <taxon>Merismopediaceae</taxon>
        <taxon>Synechocystis</taxon>
    </lineage>
</organism>
<reference key="1">
    <citation type="journal article" date="1995" name="DNA Res.">
        <title>Sequence analysis of the genome of the unicellular cyanobacterium Synechocystis sp. strain PCC6803. I. Sequence features in the 1 Mb region from map positions 64% to 92% of the genome.</title>
        <authorList>
            <person name="Kaneko T."/>
            <person name="Tanaka A."/>
            <person name="Sato S."/>
            <person name="Kotani H."/>
            <person name="Sazuka T."/>
            <person name="Miyajima N."/>
            <person name="Sugiura M."/>
            <person name="Tabata S."/>
        </authorList>
    </citation>
    <scope>NUCLEOTIDE SEQUENCE [LARGE SCALE GENOMIC DNA]</scope>
    <source>
        <strain>ATCC 27184 / PCC 6803 / N-1</strain>
    </source>
</reference>
<reference key="2">
    <citation type="journal article" date="1996" name="DNA Res.">
        <title>Sequence analysis of the genome of the unicellular cyanobacterium Synechocystis sp. strain PCC6803. II. Sequence determination of the entire genome and assignment of potential protein-coding regions.</title>
        <authorList>
            <person name="Kaneko T."/>
            <person name="Sato S."/>
            <person name="Kotani H."/>
            <person name="Tanaka A."/>
            <person name="Asamizu E."/>
            <person name="Nakamura Y."/>
            <person name="Miyajima N."/>
            <person name="Hirosawa M."/>
            <person name="Sugiura M."/>
            <person name="Sasamoto S."/>
            <person name="Kimura T."/>
            <person name="Hosouchi T."/>
            <person name="Matsuno A."/>
            <person name="Muraki A."/>
            <person name="Nakazaki N."/>
            <person name="Naruo K."/>
            <person name="Okumura S."/>
            <person name="Shimpo S."/>
            <person name="Takeuchi C."/>
            <person name="Wada T."/>
            <person name="Watanabe A."/>
            <person name="Yamada M."/>
            <person name="Yasuda M."/>
            <person name="Tabata S."/>
        </authorList>
    </citation>
    <scope>NUCLEOTIDE SEQUENCE [LARGE SCALE GENOMIC DNA]</scope>
    <source>
        <strain>ATCC 27184 / PCC 6803 / Kazusa</strain>
    </source>
</reference>
<accession>Q55622</accession>
<dbReference type="EMBL" id="BA000022">
    <property type="protein sequence ID" value="BAA10134.1"/>
    <property type="molecule type" value="Genomic_DNA"/>
</dbReference>
<dbReference type="PIR" id="S76282">
    <property type="entry name" value="S76282"/>
</dbReference>
<dbReference type="SMR" id="Q55622"/>
<dbReference type="FunCoup" id="Q55622">
    <property type="interactions" value="217"/>
</dbReference>
<dbReference type="STRING" id="1148.gene:10499627"/>
<dbReference type="PaxDb" id="1148-1001508"/>
<dbReference type="EnsemblBacteria" id="BAA10134">
    <property type="protein sequence ID" value="BAA10134"/>
    <property type="gene ID" value="BAA10134"/>
</dbReference>
<dbReference type="KEGG" id="syn:slr0780"/>
<dbReference type="eggNOG" id="COG1327">
    <property type="taxonomic scope" value="Bacteria"/>
</dbReference>
<dbReference type="InParanoid" id="Q55622"/>
<dbReference type="PhylomeDB" id="Q55622"/>
<dbReference type="Proteomes" id="UP000001425">
    <property type="component" value="Chromosome"/>
</dbReference>
<dbReference type="GO" id="GO:0005524">
    <property type="term" value="F:ATP binding"/>
    <property type="evidence" value="ECO:0007669"/>
    <property type="project" value="UniProtKB-KW"/>
</dbReference>
<dbReference type="GO" id="GO:0003690">
    <property type="term" value="F:double-stranded DNA binding"/>
    <property type="evidence" value="ECO:0000318"/>
    <property type="project" value="GO_Central"/>
</dbReference>
<dbReference type="GO" id="GO:0008270">
    <property type="term" value="F:zinc ion binding"/>
    <property type="evidence" value="ECO:0007669"/>
    <property type="project" value="UniProtKB-UniRule"/>
</dbReference>
<dbReference type="GO" id="GO:0045892">
    <property type="term" value="P:negative regulation of DNA-templated transcription"/>
    <property type="evidence" value="ECO:0000318"/>
    <property type="project" value="GO_Central"/>
</dbReference>
<dbReference type="HAMAP" id="MF_00440">
    <property type="entry name" value="NrdR"/>
    <property type="match status" value="1"/>
</dbReference>
<dbReference type="InterPro" id="IPR005144">
    <property type="entry name" value="ATP-cone_dom"/>
</dbReference>
<dbReference type="InterPro" id="IPR055173">
    <property type="entry name" value="NrdR-like_N"/>
</dbReference>
<dbReference type="InterPro" id="IPR003796">
    <property type="entry name" value="RNR_NrdR-like"/>
</dbReference>
<dbReference type="NCBIfam" id="TIGR00244">
    <property type="entry name" value="transcriptional regulator NrdR"/>
    <property type="match status" value="1"/>
</dbReference>
<dbReference type="PANTHER" id="PTHR30455">
    <property type="entry name" value="TRANSCRIPTIONAL REPRESSOR NRDR"/>
    <property type="match status" value="1"/>
</dbReference>
<dbReference type="PANTHER" id="PTHR30455:SF2">
    <property type="entry name" value="TRANSCRIPTIONAL REPRESSOR NRDR"/>
    <property type="match status" value="1"/>
</dbReference>
<dbReference type="Pfam" id="PF03477">
    <property type="entry name" value="ATP-cone"/>
    <property type="match status" value="1"/>
</dbReference>
<dbReference type="Pfam" id="PF22811">
    <property type="entry name" value="Zn_ribbon_NrdR"/>
    <property type="match status" value="1"/>
</dbReference>
<dbReference type="PROSITE" id="PS51161">
    <property type="entry name" value="ATP_CONE"/>
    <property type="match status" value="1"/>
</dbReference>